<name>ILVD_KLEP3</name>
<evidence type="ECO:0000255" key="1">
    <source>
        <dbReference type="HAMAP-Rule" id="MF_00012"/>
    </source>
</evidence>
<reference key="1">
    <citation type="journal article" date="2008" name="PLoS Genet.">
        <title>Complete genome sequence of the N2-fixing broad host range endophyte Klebsiella pneumoniae 342 and virulence predictions verified in mice.</title>
        <authorList>
            <person name="Fouts D.E."/>
            <person name="Tyler H.L."/>
            <person name="DeBoy R.T."/>
            <person name="Daugherty S."/>
            <person name="Ren Q."/>
            <person name="Badger J.H."/>
            <person name="Durkin A.S."/>
            <person name="Huot H."/>
            <person name="Shrivastava S."/>
            <person name="Kothari S."/>
            <person name="Dodson R.J."/>
            <person name="Mohamoud Y."/>
            <person name="Khouri H."/>
            <person name="Roesch L.F.W."/>
            <person name="Krogfelt K.A."/>
            <person name="Struve C."/>
            <person name="Triplett E.W."/>
            <person name="Methe B.A."/>
        </authorList>
    </citation>
    <scope>NUCLEOTIDE SEQUENCE [LARGE SCALE GENOMIC DNA]</scope>
    <source>
        <strain>342</strain>
    </source>
</reference>
<sequence length="616" mass="65692">MPKYRSATTTHGRNMAGARALWRATGMTDADFGKPIIAVVNSFTQFVPGHVHLRDLGKLVAEQIEAAGGVAKEFNTIAVDDGIAMGHGGMLYSLPSRELIADSVEYMVNAHCADAMVCISNCDKITPGMLMASLRLNIPVIFVSGGPMEAGKTKLSDKIIKLDLVDAMIQGADPKVSDEQSNQVERSACPTCGSCSGMFTANSMNCLTEALGLSQPGNGSLLATHADRKELFLNAGKRIVELTKRYYEQDDASALPRNIASKAAFENAMTLDIAMGGSTNTVLHLLAAAQEAEIDFTMSDIDKLSRKVPQLCKVAPSTQKYHMEDVHRAGGVLGILGELDRAGLLNRDVKNVLGLTLPQTLEQYDVMVTQDDAVKKMFRAGPAGIRTTQAFSQDCRWDTLDDDRAEGCIRSLEHAYSKDGGLAVLYGNFAENGCIVKTAGVDDSILKFTGPAKVYESQDEAVDAILGGKVVEGDVVVIRYEGPKGGPGMQEMLYPTTFLKSMGLGKACALITDGRFSGGTSGLSIGHVSPEAASGGNIAIIEDGDMIAIDIPNRGIQLQLSDAEIAARREAQEARGDKAWTPKDRERQVSFALRAYASLATSADKGAVRDKSKLGG</sequence>
<comment type="function">
    <text evidence="1">Functions in the biosynthesis of branched-chain amino acids. Catalyzes the dehydration of (2R,3R)-2,3-dihydroxy-3-methylpentanoate (2,3-dihydroxy-3-methylvalerate) into 2-oxo-3-methylpentanoate (2-oxo-3-methylvalerate) and of (2R)-2,3-dihydroxy-3-methylbutanoate (2,3-dihydroxyisovalerate) into 2-oxo-3-methylbutanoate (2-oxoisovalerate), the penultimate precursor to L-isoleucine and L-valine, respectively.</text>
</comment>
<comment type="catalytic activity">
    <reaction evidence="1">
        <text>(2R)-2,3-dihydroxy-3-methylbutanoate = 3-methyl-2-oxobutanoate + H2O</text>
        <dbReference type="Rhea" id="RHEA:24809"/>
        <dbReference type="ChEBI" id="CHEBI:11851"/>
        <dbReference type="ChEBI" id="CHEBI:15377"/>
        <dbReference type="ChEBI" id="CHEBI:49072"/>
        <dbReference type="EC" id="4.2.1.9"/>
    </reaction>
    <physiologicalReaction direction="left-to-right" evidence="1">
        <dbReference type="Rhea" id="RHEA:24810"/>
    </physiologicalReaction>
</comment>
<comment type="catalytic activity">
    <reaction evidence="1">
        <text>(2R,3R)-2,3-dihydroxy-3-methylpentanoate = (S)-3-methyl-2-oxopentanoate + H2O</text>
        <dbReference type="Rhea" id="RHEA:27694"/>
        <dbReference type="ChEBI" id="CHEBI:15377"/>
        <dbReference type="ChEBI" id="CHEBI:35146"/>
        <dbReference type="ChEBI" id="CHEBI:49258"/>
        <dbReference type="EC" id="4.2.1.9"/>
    </reaction>
    <physiologicalReaction direction="left-to-right" evidence="1">
        <dbReference type="Rhea" id="RHEA:27695"/>
    </physiologicalReaction>
</comment>
<comment type="cofactor">
    <cofactor evidence="1">
        <name>[2Fe-2S] cluster</name>
        <dbReference type="ChEBI" id="CHEBI:190135"/>
    </cofactor>
    <text evidence="1">Binds 1 [2Fe-2S] cluster per subunit. This cluster acts as a Lewis acid cofactor.</text>
</comment>
<comment type="cofactor">
    <cofactor evidence="1">
        <name>Mg(2+)</name>
        <dbReference type="ChEBI" id="CHEBI:18420"/>
    </cofactor>
</comment>
<comment type="pathway">
    <text evidence="1">Amino-acid biosynthesis; L-isoleucine biosynthesis; L-isoleucine from 2-oxobutanoate: step 3/4.</text>
</comment>
<comment type="pathway">
    <text evidence="1">Amino-acid biosynthesis; L-valine biosynthesis; L-valine from pyruvate: step 3/4.</text>
</comment>
<comment type="subunit">
    <text evidence="1">Homodimer.</text>
</comment>
<comment type="similarity">
    <text evidence="1">Belongs to the IlvD/Edd family.</text>
</comment>
<organism>
    <name type="scientific">Klebsiella pneumoniae (strain 342)</name>
    <dbReference type="NCBI Taxonomy" id="507522"/>
    <lineage>
        <taxon>Bacteria</taxon>
        <taxon>Pseudomonadati</taxon>
        <taxon>Pseudomonadota</taxon>
        <taxon>Gammaproteobacteria</taxon>
        <taxon>Enterobacterales</taxon>
        <taxon>Enterobacteriaceae</taxon>
        <taxon>Klebsiella/Raoultella group</taxon>
        <taxon>Klebsiella</taxon>
        <taxon>Klebsiella pneumoniae complex</taxon>
    </lineage>
</organism>
<gene>
    <name evidence="1" type="primary">ilvD</name>
    <name type="ordered locus">KPK_5410</name>
</gene>
<accession>B5XZ01</accession>
<protein>
    <recommendedName>
        <fullName evidence="1">Dihydroxy-acid dehydratase</fullName>
        <shortName evidence="1">DAD</shortName>
        <ecNumber evidence="1">4.2.1.9</ecNumber>
    </recommendedName>
</protein>
<keyword id="KW-0001">2Fe-2S</keyword>
<keyword id="KW-0028">Amino-acid biosynthesis</keyword>
<keyword id="KW-0100">Branched-chain amino acid biosynthesis</keyword>
<keyword id="KW-0408">Iron</keyword>
<keyword id="KW-0411">Iron-sulfur</keyword>
<keyword id="KW-0456">Lyase</keyword>
<keyword id="KW-0460">Magnesium</keyword>
<keyword id="KW-0479">Metal-binding</keyword>
<feature type="chain" id="PRO_1000089391" description="Dihydroxy-acid dehydratase">
    <location>
        <begin position="1"/>
        <end position="616"/>
    </location>
</feature>
<feature type="active site" description="Proton acceptor" evidence="1">
    <location>
        <position position="517"/>
    </location>
</feature>
<feature type="binding site" evidence="1">
    <location>
        <position position="81"/>
    </location>
    <ligand>
        <name>Mg(2+)</name>
        <dbReference type="ChEBI" id="CHEBI:18420"/>
    </ligand>
</feature>
<feature type="binding site" evidence="1">
    <location>
        <position position="122"/>
    </location>
    <ligand>
        <name>[2Fe-2S] cluster</name>
        <dbReference type="ChEBI" id="CHEBI:190135"/>
    </ligand>
</feature>
<feature type="binding site" evidence="1">
    <location>
        <position position="123"/>
    </location>
    <ligand>
        <name>Mg(2+)</name>
        <dbReference type="ChEBI" id="CHEBI:18420"/>
    </ligand>
</feature>
<feature type="binding site" description="via carbamate group" evidence="1">
    <location>
        <position position="124"/>
    </location>
    <ligand>
        <name>Mg(2+)</name>
        <dbReference type="ChEBI" id="CHEBI:18420"/>
    </ligand>
</feature>
<feature type="binding site" evidence="1">
    <location>
        <position position="195"/>
    </location>
    <ligand>
        <name>[2Fe-2S] cluster</name>
        <dbReference type="ChEBI" id="CHEBI:190135"/>
    </ligand>
</feature>
<feature type="binding site" evidence="1">
    <location>
        <position position="491"/>
    </location>
    <ligand>
        <name>Mg(2+)</name>
        <dbReference type="ChEBI" id="CHEBI:18420"/>
    </ligand>
</feature>
<feature type="modified residue" description="N6-carboxylysine" evidence="1">
    <location>
        <position position="124"/>
    </location>
</feature>
<proteinExistence type="inferred from homology"/>
<dbReference type="EC" id="4.2.1.9" evidence="1"/>
<dbReference type="EMBL" id="CP000964">
    <property type="protein sequence ID" value="ACI08925.1"/>
    <property type="molecule type" value="Genomic_DNA"/>
</dbReference>
<dbReference type="SMR" id="B5XZ01"/>
<dbReference type="KEGG" id="kpe:KPK_5410"/>
<dbReference type="HOGENOM" id="CLU_014271_4_2_6"/>
<dbReference type="UniPathway" id="UPA00047">
    <property type="reaction ID" value="UER00057"/>
</dbReference>
<dbReference type="UniPathway" id="UPA00049">
    <property type="reaction ID" value="UER00061"/>
</dbReference>
<dbReference type="Proteomes" id="UP000001734">
    <property type="component" value="Chromosome"/>
</dbReference>
<dbReference type="GO" id="GO:0005829">
    <property type="term" value="C:cytosol"/>
    <property type="evidence" value="ECO:0007669"/>
    <property type="project" value="TreeGrafter"/>
</dbReference>
<dbReference type="GO" id="GO:0051537">
    <property type="term" value="F:2 iron, 2 sulfur cluster binding"/>
    <property type="evidence" value="ECO:0007669"/>
    <property type="project" value="UniProtKB-UniRule"/>
</dbReference>
<dbReference type="GO" id="GO:0004160">
    <property type="term" value="F:dihydroxy-acid dehydratase activity"/>
    <property type="evidence" value="ECO:0007669"/>
    <property type="project" value="UniProtKB-UniRule"/>
</dbReference>
<dbReference type="GO" id="GO:0000287">
    <property type="term" value="F:magnesium ion binding"/>
    <property type="evidence" value="ECO:0007669"/>
    <property type="project" value="UniProtKB-UniRule"/>
</dbReference>
<dbReference type="GO" id="GO:0009097">
    <property type="term" value="P:isoleucine biosynthetic process"/>
    <property type="evidence" value="ECO:0007669"/>
    <property type="project" value="UniProtKB-UniRule"/>
</dbReference>
<dbReference type="GO" id="GO:0009099">
    <property type="term" value="P:L-valine biosynthetic process"/>
    <property type="evidence" value="ECO:0007669"/>
    <property type="project" value="UniProtKB-UniRule"/>
</dbReference>
<dbReference type="FunFam" id="3.50.30.80:FF:000001">
    <property type="entry name" value="Dihydroxy-acid dehydratase"/>
    <property type="match status" value="1"/>
</dbReference>
<dbReference type="Gene3D" id="3.50.30.80">
    <property type="entry name" value="IlvD/EDD C-terminal domain-like"/>
    <property type="match status" value="1"/>
</dbReference>
<dbReference type="HAMAP" id="MF_00012">
    <property type="entry name" value="IlvD"/>
    <property type="match status" value="1"/>
</dbReference>
<dbReference type="InterPro" id="IPR042096">
    <property type="entry name" value="Dihydro-acid_dehy_C"/>
</dbReference>
<dbReference type="InterPro" id="IPR004404">
    <property type="entry name" value="DihydroxyA_deHydtase"/>
</dbReference>
<dbReference type="InterPro" id="IPR020558">
    <property type="entry name" value="DiOHA_6PGluconate_deHydtase_CS"/>
</dbReference>
<dbReference type="InterPro" id="IPR056740">
    <property type="entry name" value="ILV_EDD_C"/>
</dbReference>
<dbReference type="InterPro" id="IPR000581">
    <property type="entry name" value="ILV_EDD_N"/>
</dbReference>
<dbReference type="InterPro" id="IPR037237">
    <property type="entry name" value="IlvD/EDD_N"/>
</dbReference>
<dbReference type="NCBIfam" id="TIGR00110">
    <property type="entry name" value="ilvD"/>
    <property type="match status" value="1"/>
</dbReference>
<dbReference type="NCBIfam" id="NF009103">
    <property type="entry name" value="PRK12448.1"/>
    <property type="match status" value="1"/>
</dbReference>
<dbReference type="PANTHER" id="PTHR43661">
    <property type="entry name" value="D-XYLONATE DEHYDRATASE"/>
    <property type="match status" value="1"/>
</dbReference>
<dbReference type="PANTHER" id="PTHR43661:SF3">
    <property type="entry name" value="D-XYLONATE DEHYDRATASE YAGF-RELATED"/>
    <property type="match status" value="1"/>
</dbReference>
<dbReference type="Pfam" id="PF24877">
    <property type="entry name" value="ILV_EDD_C"/>
    <property type="match status" value="1"/>
</dbReference>
<dbReference type="Pfam" id="PF00920">
    <property type="entry name" value="ILVD_EDD_N"/>
    <property type="match status" value="1"/>
</dbReference>
<dbReference type="SUPFAM" id="SSF143975">
    <property type="entry name" value="IlvD/EDD N-terminal domain-like"/>
    <property type="match status" value="1"/>
</dbReference>
<dbReference type="SUPFAM" id="SSF52016">
    <property type="entry name" value="LeuD/IlvD-like"/>
    <property type="match status" value="1"/>
</dbReference>
<dbReference type="PROSITE" id="PS00886">
    <property type="entry name" value="ILVD_EDD_1"/>
    <property type="match status" value="1"/>
</dbReference>
<dbReference type="PROSITE" id="PS00887">
    <property type="entry name" value="ILVD_EDD_2"/>
    <property type="match status" value="1"/>
</dbReference>